<evidence type="ECO:0000255" key="1">
    <source>
        <dbReference type="HAMAP-Rule" id="MF_00804"/>
    </source>
</evidence>
<gene>
    <name evidence="1" type="primary">betB</name>
    <name type="ordered locus">ECP_0387</name>
</gene>
<reference key="1">
    <citation type="journal article" date="2006" name="Mol. Microbiol.">
        <title>Role of pathogenicity island-associated integrases in the genome plasticity of uropathogenic Escherichia coli strain 536.</title>
        <authorList>
            <person name="Hochhut B."/>
            <person name="Wilde C."/>
            <person name="Balling G."/>
            <person name="Middendorf B."/>
            <person name="Dobrindt U."/>
            <person name="Brzuszkiewicz E."/>
            <person name="Gottschalk G."/>
            <person name="Carniel E."/>
            <person name="Hacker J."/>
        </authorList>
    </citation>
    <scope>NUCLEOTIDE SEQUENCE [LARGE SCALE GENOMIC DNA]</scope>
    <source>
        <strain>536 / UPEC</strain>
    </source>
</reference>
<feature type="chain" id="PRO_1000047043" description="Betaine aldehyde dehydrogenase">
    <location>
        <begin position="1"/>
        <end position="490"/>
    </location>
</feature>
<feature type="active site" description="Charge relay system" evidence="1">
    <location>
        <position position="162"/>
    </location>
</feature>
<feature type="active site" description="Proton acceptor" evidence="1">
    <location>
        <position position="252"/>
    </location>
</feature>
<feature type="active site" description="Nucleophile" evidence="1">
    <location>
        <position position="286"/>
    </location>
</feature>
<feature type="active site" description="Charge relay system" evidence="1">
    <location>
        <position position="464"/>
    </location>
</feature>
<feature type="binding site" evidence="1">
    <location>
        <position position="26"/>
    </location>
    <ligand>
        <name>K(+)</name>
        <dbReference type="ChEBI" id="CHEBI:29103"/>
        <label>1</label>
    </ligand>
</feature>
<feature type="binding site" evidence="1">
    <location>
        <position position="27"/>
    </location>
    <ligand>
        <name>K(+)</name>
        <dbReference type="ChEBI" id="CHEBI:29103"/>
        <label>1</label>
    </ligand>
</feature>
<feature type="binding site" evidence="1">
    <location>
        <position position="93"/>
    </location>
    <ligand>
        <name>K(+)</name>
        <dbReference type="ChEBI" id="CHEBI:29103"/>
        <label>1</label>
    </ligand>
</feature>
<feature type="binding site" evidence="1">
    <location>
        <begin position="150"/>
        <end position="152"/>
    </location>
    <ligand>
        <name>NAD(+)</name>
        <dbReference type="ChEBI" id="CHEBI:57540"/>
    </ligand>
</feature>
<feature type="binding site" evidence="1">
    <location>
        <begin position="176"/>
        <end position="179"/>
    </location>
    <ligand>
        <name>NAD(+)</name>
        <dbReference type="ChEBI" id="CHEBI:57540"/>
    </ligand>
</feature>
<feature type="binding site" evidence="1">
    <location>
        <position position="180"/>
    </location>
    <ligand>
        <name>K(+)</name>
        <dbReference type="ChEBI" id="CHEBI:29103"/>
        <label>1</label>
    </ligand>
</feature>
<feature type="binding site" evidence="1">
    <location>
        <begin position="230"/>
        <end position="233"/>
    </location>
    <ligand>
        <name>NAD(+)</name>
        <dbReference type="ChEBI" id="CHEBI:57540"/>
    </ligand>
</feature>
<feature type="binding site" evidence="1">
    <location>
        <position position="246"/>
    </location>
    <ligand>
        <name>K(+)</name>
        <dbReference type="ChEBI" id="CHEBI:29103"/>
        <label>2</label>
    </ligand>
</feature>
<feature type="binding site" evidence="1">
    <location>
        <position position="254"/>
    </location>
    <ligand>
        <name>NAD(+)</name>
        <dbReference type="ChEBI" id="CHEBI:57540"/>
    </ligand>
</feature>
<feature type="binding site" description="covalent" evidence="1">
    <location>
        <position position="286"/>
    </location>
    <ligand>
        <name>NAD(+)</name>
        <dbReference type="ChEBI" id="CHEBI:57540"/>
    </ligand>
</feature>
<feature type="binding site" evidence="1">
    <location>
        <position position="387"/>
    </location>
    <ligand>
        <name>NAD(+)</name>
        <dbReference type="ChEBI" id="CHEBI:57540"/>
    </ligand>
</feature>
<feature type="binding site" evidence="1">
    <location>
        <position position="457"/>
    </location>
    <ligand>
        <name>K(+)</name>
        <dbReference type="ChEBI" id="CHEBI:29103"/>
        <label>2</label>
    </ligand>
</feature>
<feature type="binding site" evidence="1">
    <location>
        <position position="460"/>
    </location>
    <ligand>
        <name>K(+)</name>
        <dbReference type="ChEBI" id="CHEBI:29103"/>
        <label>2</label>
    </ligand>
</feature>
<feature type="site" description="Seems to be a necessary countercharge to the potassium cations" evidence="1">
    <location>
        <position position="248"/>
    </location>
</feature>
<feature type="modified residue" description="Cysteine sulfenic acid (-SOH)" evidence="1">
    <location>
        <position position="286"/>
    </location>
</feature>
<sequence>MSRMAEQQLYIHGGYTSATSGHTFETINPANGNVLATVQAAGREDVDRAVKSAQQGQKIWAAMTAMERSRILRRAVDILRERNDELAKLETLDTGKAYSETSTVDIVTGADVLEYYAGLIPSLEGSQIPLRETSFVYTRREPLGVVAGIGAWNYPIQIALWKSAPALAAGNAMIFKPSEVTPLTALKLAEIYSEAGLPDGVFNVLPGVGAETGQYLTEHPGIAKVSFTGGVASGKKVMANSAASSLKEVTMELGGKSPLIVFDDADLELAADIAMMANFFSSGQVCTNGTRVFVPAKCKAAFEQKILARVERIRADDVFDPQTNFGPLVSFPHRDNVLRYIAKGKEEGARVLCGGDVLKGDGFDNGAWVAPTVFTDCSDDMTIVREEIFGPVMSILIYESEDEVIRRANDTDYGLAAGIVTADLNRAHRVIHQLEAGICWINTWGESPAEMPVGGYKHSGIGRENGVMTLQSYTQVKSIQVEMAKFQSIF</sequence>
<proteinExistence type="inferred from homology"/>
<accession>Q0TKW0</accession>
<comment type="function">
    <text evidence="1">Involved in the biosynthesis of the osmoprotectant glycine betaine. Catalyzes the irreversible oxidation of betaine aldehyde to the corresponding acid.</text>
</comment>
<comment type="catalytic activity">
    <reaction evidence="1">
        <text>betaine aldehyde + NAD(+) + H2O = glycine betaine + NADH + 2 H(+)</text>
        <dbReference type="Rhea" id="RHEA:15305"/>
        <dbReference type="ChEBI" id="CHEBI:15377"/>
        <dbReference type="ChEBI" id="CHEBI:15378"/>
        <dbReference type="ChEBI" id="CHEBI:15710"/>
        <dbReference type="ChEBI" id="CHEBI:17750"/>
        <dbReference type="ChEBI" id="CHEBI:57540"/>
        <dbReference type="ChEBI" id="CHEBI:57945"/>
        <dbReference type="EC" id="1.2.1.8"/>
    </reaction>
    <physiologicalReaction direction="left-to-right" evidence="1">
        <dbReference type="Rhea" id="RHEA:15306"/>
    </physiologicalReaction>
</comment>
<comment type="cofactor">
    <cofactor evidence="1">
        <name>K(+)</name>
        <dbReference type="ChEBI" id="CHEBI:29103"/>
    </cofactor>
    <text evidence="1">Binds 2 potassium ions per subunit.</text>
</comment>
<comment type="pathway">
    <text evidence="1">Amine and polyamine biosynthesis; betaine biosynthesis via choline pathway; betaine from betaine aldehyde: step 1/1.</text>
</comment>
<comment type="subunit">
    <text evidence="1">Dimer of dimers.</text>
</comment>
<comment type="similarity">
    <text evidence="1">Belongs to the aldehyde dehydrogenase family.</text>
</comment>
<keyword id="KW-0479">Metal-binding</keyword>
<keyword id="KW-0520">NAD</keyword>
<keyword id="KW-0521">NADP</keyword>
<keyword id="KW-0558">Oxidation</keyword>
<keyword id="KW-0560">Oxidoreductase</keyword>
<keyword id="KW-0630">Potassium</keyword>
<dbReference type="EC" id="1.2.1.8" evidence="1"/>
<dbReference type="EMBL" id="CP000247">
    <property type="protein sequence ID" value="ABG68421.1"/>
    <property type="molecule type" value="Genomic_DNA"/>
</dbReference>
<dbReference type="RefSeq" id="WP_000089053.1">
    <property type="nucleotide sequence ID" value="NC_008253.1"/>
</dbReference>
<dbReference type="SMR" id="Q0TKW0"/>
<dbReference type="KEGG" id="ecp:ECP_0387"/>
<dbReference type="HOGENOM" id="CLU_005391_0_2_6"/>
<dbReference type="UniPathway" id="UPA00529">
    <property type="reaction ID" value="UER00386"/>
</dbReference>
<dbReference type="Proteomes" id="UP000009182">
    <property type="component" value="Chromosome"/>
</dbReference>
<dbReference type="GO" id="GO:0008802">
    <property type="term" value="F:betaine-aldehyde dehydrogenase (NAD+) activity"/>
    <property type="evidence" value="ECO:0007669"/>
    <property type="project" value="UniProtKB-UniRule"/>
</dbReference>
<dbReference type="GO" id="GO:0046872">
    <property type="term" value="F:metal ion binding"/>
    <property type="evidence" value="ECO:0007669"/>
    <property type="project" value="UniProtKB-KW"/>
</dbReference>
<dbReference type="GO" id="GO:0019285">
    <property type="term" value="P:glycine betaine biosynthetic process from choline"/>
    <property type="evidence" value="ECO:0007669"/>
    <property type="project" value="UniProtKB-UniRule"/>
</dbReference>
<dbReference type="CDD" id="cd07090">
    <property type="entry name" value="ALDH_F9_TMBADH"/>
    <property type="match status" value="1"/>
</dbReference>
<dbReference type="FunFam" id="3.40.309.10:FF:000014">
    <property type="entry name" value="NAD/NADP-dependent betaine aldehyde dehydrogenase"/>
    <property type="match status" value="1"/>
</dbReference>
<dbReference type="FunFam" id="3.40.605.10:FF:000007">
    <property type="entry name" value="NAD/NADP-dependent betaine aldehyde dehydrogenase"/>
    <property type="match status" value="1"/>
</dbReference>
<dbReference type="Gene3D" id="3.40.605.10">
    <property type="entry name" value="Aldehyde Dehydrogenase, Chain A, domain 1"/>
    <property type="match status" value="1"/>
</dbReference>
<dbReference type="Gene3D" id="3.40.309.10">
    <property type="entry name" value="Aldehyde Dehydrogenase, Chain A, domain 2"/>
    <property type="match status" value="1"/>
</dbReference>
<dbReference type="HAMAP" id="MF_00804">
    <property type="entry name" value="BADH"/>
    <property type="match status" value="1"/>
</dbReference>
<dbReference type="InterPro" id="IPR016161">
    <property type="entry name" value="Ald_DH/histidinol_DH"/>
</dbReference>
<dbReference type="InterPro" id="IPR016163">
    <property type="entry name" value="Ald_DH_C"/>
</dbReference>
<dbReference type="InterPro" id="IPR016160">
    <property type="entry name" value="Ald_DH_CS_CYS"/>
</dbReference>
<dbReference type="InterPro" id="IPR029510">
    <property type="entry name" value="Ald_DH_CS_GLU"/>
</dbReference>
<dbReference type="InterPro" id="IPR016162">
    <property type="entry name" value="Ald_DH_N"/>
</dbReference>
<dbReference type="InterPro" id="IPR015590">
    <property type="entry name" value="Aldehyde_DH_dom"/>
</dbReference>
<dbReference type="InterPro" id="IPR011264">
    <property type="entry name" value="BADH"/>
</dbReference>
<dbReference type="NCBIfam" id="TIGR01804">
    <property type="entry name" value="BADH"/>
    <property type="match status" value="1"/>
</dbReference>
<dbReference type="NCBIfam" id="NF009725">
    <property type="entry name" value="PRK13252.1"/>
    <property type="match status" value="1"/>
</dbReference>
<dbReference type="PANTHER" id="PTHR11699">
    <property type="entry name" value="ALDEHYDE DEHYDROGENASE-RELATED"/>
    <property type="match status" value="1"/>
</dbReference>
<dbReference type="Pfam" id="PF00171">
    <property type="entry name" value="Aldedh"/>
    <property type="match status" value="1"/>
</dbReference>
<dbReference type="SUPFAM" id="SSF53720">
    <property type="entry name" value="ALDH-like"/>
    <property type="match status" value="1"/>
</dbReference>
<dbReference type="PROSITE" id="PS00070">
    <property type="entry name" value="ALDEHYDE_DEHYDR_CYS"/>
    <property type="match status" value="1"/>
</dbReference>
<dbReference type="PROSITE" id="PS00687">
    <property type="entry name" value="ALDEHYDE_DEHYDR_GLU"/>
    <property type="match status" value="1"/>
</dbReference>
<name>BETB_ECOL5</name>
<protein>
    <recommendedName>
        <fullName evidence="1">Betaine aldehyde dehydrogenase</fullName>
        <shortName evidence="1">BADH</shortName>
        <ecNumber evidence="1">1.2.1.8</ecNumber>
    </recommendedName>
</protein>
<organism>
    <name type="scientific">Escherichia coli O6:K15:H31 (strain 536 / UPEC)</name>
    <dbReference type="NCBI Taxonomy" id="362663"/>
    <lineage>
        <taxon>Bacteria</taxon>
        <taxon>Pseudomonadati</taxon>
        <taxon>Pseudomonadota</taxon>
        <taxon>Gammaproteobacteria</taxon>
        <taxon>Enterobacterales</taxon>
        <taxon>Enterobacteriaceae</taxon>
        <taxon>Escherichia</taxon>
    </lineage>
</organism>